<comment type="function">
    <text evidence="1">Represses a number of genes involved in the response to DNA damage (SOS response), including recA and lexA. In the presence of single-stranded DNA, RecA interacts with LexA causing an autocatalytic cleavage which disrupts the DNA-binding part of LexA, leading to derepression of the SOS regulon and eventually DNA repair.</text>
</comment>
<comment type="catalytic activity">
    <reaction evidence="1">
        <text>Hydrolysis of Ala-|-Gly bond in repressor LexA.</text>
        <dbReference type="EC" id="3.4.21.88"/>
    </reaction>
</comment>
<comment type="subunit">
    <text evidence="1">Homodimer.</text>
</comment>
<comment type="similarity">
    <text evidence="1">Belongs to the peptidase S24 family.</text>
</comment>
<organism>
    <name type="scientific">Aliivibrio salmonicida (strain LFI1238)</name>
    <name type="common">Vibrio salmonicida (strain LFI1238)</name>
    <dbReference type="NCBI Taxonomy" id="316275"/>
    <lineage>
        <taxon>Bacteria</taxon>
        <taxon>Pseudomonadati</taxon>
        <taxon>Pseudomonadota</taxon>
        <taxon>Gammaproteobacteria</taxon>
        <taxon>Vibrionales</taxon>
        <taxon>Vibrionaceae</taxon>
        <taxon>Aliivibrio</taxon>
    </lineage>
</organism>
<accession>B6ENU0</accession>
<dbReference type="EC" id="3.4.21.88" evidence="1"/>
<dbReference type="EMBL" id="FM178379">
    <property type="protein sequence ID" value="CAQ80577.1"/>
    <property type="molecule type" value="Genomic_DNA"/>
</dbReference>
<dbReference type="RefSeq" id="WP_012551311.1">
    <property type="nucleotide sequence ID" value="NC_011312.1"/>
</dbReference>
<dbReference type="SMR" id="B6ENU0"/>
<dbReference type="MEROPS" id="S24.001"/>
<dbReference type="KEGG" id="vsa:VSAL_I2893"/>
<dbReference type="eggNOG" id="COG1974">
    <property type="taxonomic scope" value="Bacteria"/>
</dbReference>
<dbReference type="HOGENOM" id="CLU_066192_45_3_6"/>
<dbReference type="Proteomes" id="UP000001730">
    <property type="component" value="Chromosome 1"/>
</dbReference>
<dbReference type="GO" id="GO:0003677">
    <property type="term" value="F:DNA binding"/>
    <property type="evidence" value="ECO:0007669"/>
    <property type="project" value="UniProtKB-UniRule"/>
</dbReference>
<dbReference type="GO" id="GO:0004252">
    <property type="term" value="F:serine-type endopeptidase activity"/>
    <property type="evidence" value="ECO:0007669"/>
    <property type="project" value="UniProtKB-UniRule"/>
</dbReference>
<dbReference type="GO" id="GO:0006281">
    <property type="term" value="P:DNA repair"/>
    <property type="evidence" value="ECO:0007669"/>
    <property type="project" value="UniProtKB-UniRule"/>
</dbReference>
<dbReference type="GO" id="GO:0006260">
    <property type="term" value="P:DNA replication"/>
    <property type="evidence" value="ECO:0007669"/>
    <property type="project" value="UniProtKB-UniRule"/>
</dbReference>
<dbReference type="GO" id="GO:0045892">
    <property type="term" value="P:negative regulation of DNA-templated transcription"/>
    <property type="evidence" value="ECO:0007669"/>
    <property type="project" value="UniProtKB-UniRule"/>
</dbReference>
<dbReference type="GO" id="GO:0006508">
    <property type="term" value="P:proteolysis"/>
    <property type="evidence" value="ECO:0007669"/>
    <property type="project" value="InterPro"/>
</dbReference>
<dbReference type="GO" id="GO:0009432">
    <property type="term" value="P:SOS response"/>
    <property type="evidence" value="ECO:0007669"/>
    <property type="project" value="UniProtKB-UniRule"/>
</dbReference>
<dbReference type="CDD" id="cd06529">
    <property type="entry name" value="S24_LexA-like"/>
    <property type="match status" value="1"/>
</dbReference>
<dbReference type="FunFam" id="1.10.10.10:FF:000009">
    <property type="entry name" value="LexA repressor"/>
    <property type="match status" value="1"/>
</dbReference>
<dbReference type="FunFam" id="2.10.109.10:FF:000001">
    <property type="entry name" value="LexA repressor"/>
    <property type="match status" value="1"/>
</dbReference>
<dbReference type="Gene3D" id="2.10.109.10">
    <property type="entry name" value="Umud Fragment, subunit A"/>
    <property type="match status" value="1"/>
</dbReference>
<dbReference type="Gene3D" id="1.10.10.10">
    <property type="entry name" value="Winged helix-like DNA-binding domain superfamily/Winged helix DNA-binding domain"/>
    <property type="match status" value="1"/>
</dbReference>
<dbReference type="HAMAP" id="MF_00015">
    <property type="entry name" value="LexA"/>
    <property type="match status" value="1"/>
</dbReference>
<dbReference type="InterPro" id="IPR006200">
    <property type="entry name" value="LexA"/>
</dbReference>
<dbReference type="InterPro" id="IPR039418">
    <property type="entry name" value="LexA-like"/>
</dbReference>
<dbReference type="InterPro" id="IPR036286">
    <property type="entry name" value="LexA/Signal_pep-like_sf"/>
</dbReference>
<dbReference type="InterPro" id="IPR006199">
    <property type="entry name" value="LexA_DNA-bd_dom"/>
</dbReference>
<dbReference type="InterPro" id="IPR050077">
    <property type="entry name" value="LexA_repressor"/>
</dbReference>
<dbReference type="InterPro" id="IPR006197">
    <property type="entry name" value="Peptidase_S24_LexA"/>
</dbReference>
<dbReference type="InterPro" id="IPR015927">
    <property type="entry name" value="Peptidase_S24_S26A/B/C"/>
</dbReference>
<dbReference type="InterPro" id="IPR036388">
    <property type="entry name" value="WH-like_DNA-bd_sf"/>
</dbReference>
<dbReference type="InterPro" id="IPR036390">
    <property type="entry name" value="WH_DNA-bd_sf"/>
</dbReference>
<dbReference type="NCBIfam" id="TIGR00498">
    <property type="entry name" value="lexA"/>
    <property type="match status" value="1"/>
</dbReference>
<dbReference type="PANTHER" id="PTHR33516">
    <property type="entry name" value="LEXA REPRESSOR"/>
    <property type="match status" value="1"/>
</dbReference>
<dbReference type="PANTHER" id="PTHR33516:SF2">
    <property type="entry name" value="LEXA REPRESSOR-RELATED"/>
    <property type="match status" value="1"/>
</dbReference>
<dbReference type="Pfam" id="PF01726">
    <property type="entry name" value="LexA_DNA_bind"/>
    <property type="match status" value="1"/>
</dbReference>
<dbReference type="Pfam" id="PF00717">
    <property type="entry name" value="Peptidase_S24"/>
    <property type="match status" value="1"/>
</dbReference>
<dbReference type="PRINTS" id="PR00726">
    <property type="entry name" value="LEXASERPTASE"/>
</dbReference>
<dbReference type="SUPFAM" id="SSF51306">
    <property type="entry name" value="LexA/Signal peptidase"/>
    <property type="match status" value="1"/>
</dbReference>
<dbReference type="SUPFAM" id="SSF46785">
    <property type="entry name" value="Winged helix' DNA-binding domain"/>
    <property type="match status" value="1"/>
</dbReference>
<name>LEXA_ALISL</name>
<feature type="chain" id="PRO_1000089542" description="LexA repressor">
    <location>
        <begin position="1"/>
        <end position="207"/>
    </location>
</feature>
<feature type="DNA-binding region" description="H-T-H motif" evidence="1">
    <location>
        <begin position="28"/>
        <end position="48"/>
    </location>
</feature>
<feature type="active site" description="For autocatalytic cleavage activity" evidence="1">
    <location>
        <position position="124"/>
    </location>
</feature>
<feature type="active site" description="For autocatalytic cleavage activity" evidence="1">
    <location>
        <position position="161"/>
    </location>
</feature>
<feature type="site" description="Cleavage; by autolysis" evidence="1">
    <location>
        <begin position="89"/>
        <end position="90"/>
    </location>
</feature>
<gene>
    <name evidence="1" type="primary">lexA</name>
    <name type="ordered locus">VSAL_I2893</name>
</gene>
<protein>
    <recommendedName>
        <fullName evidence="1">LexA repressor</fullName>
        <ecNumber evidence="1">3.4.21.88</ecNumber>
    </recommendedName>
</protein>
<sequence>MKPLTARQQEVFELIKAKIEDTGMPPTRAEIARELGFRSANAAEEHLKALARKQAIEIIPGASRGIRILLQDPVEPEDLGLPLIGQVAAGEPILAQEHVESHYQVDPSMFKPQADFLLRVNGESMKNIGIMDGDLLAVHKTQDVHDGQVVVARVDDDVTVKRLERKGSMVFLHAENEEFAPIQVDLTSQHLSIEGIAVGVIRSTTWM</sequence>
<reference key="1">
    <citation type="journal article" date="2008" name="BMC Genomics">
        <title>The genome sequence of the fish pathogen Aliivibrio salmonicida strain LFI1238 shows extensive evidence of gene decay.</title>
        <authorList>
            <person name="Hjerde E."/>
            <person name="Lorentzen M.S."/>
            <person name="Holden M.T."/>
            <person name="Seeger K."/>
            <person name="Paulsen S."/>
            <person name="Bason N."/>
            <person name="Churcher C."/>
            <person name="Harris D."/>
            <person name="Norbertczak H."/>
            <person name="Quail M.A."/>
            <person name="Sanders S."/>
            <person name="Thurston S."/>
            <person name="Parkhill J."/>
            <person name="Willassen N.P."/>
            <person name="Thomson N.R."/>
        </authorList>
    </citation>
    <scope>NUCLEOTIDE SEQUENCE [LARGE SCALE GENOMIC DNA]</scope>
    <source>
        <strain>LFI1238</strain>
    </source>
</reference>
<evidence type="ECO:0000255" key="1">
    <source>
        <dbReference type="HAMAP-Rule" id="MF_00015"/>
    </source>
</evidence>
<keyword id="KW-0068">Autocatalytic cleavage</keyword>
<keyword id="KW-0227">DNA damage</keyword>
<keyword id="KW-0234">DNA repair</keyword>
<keyword id="KW-0235">DNA replication</keyword>
<keyword id="KW-0238">DNA-binding</keyword>
<keyword id="KW-0378">Hydrolase</keyword>
<keyword id="KW-0678">Repressor</keyword>
<keyword id="KW-0742">SOS response</keyword>
<keyword id="KW-0804">Transcription</keyword>
<keyword id="KW-0805">Transcription regulation</keyword>
<proteinExistence type="inferred from homology"/>